<feature type="chain" id="PRO_0000224731" description="UDP-N-acetylenolpyruvoylglucosamine reductase">
    <location>
        <begin position="1"/>
        <end position="356"/>
    </location>
</feature>
<feature type="domain" description="FAD-binding PCMH-type" evidence="1">
    <location>
        <begin position="19"/>
        <end position="227"/>
    </location>
</feature>
<feature type="active site" evidence="1">
    <location>
        <position position="167"/>
    </location>
</feature>
<feature type="active site" description="Proton donor" evidence="1">
    <location>
        <position position="244"/>
    </location>
</feature>
<feature type="active site" evidence="1">
    <location>
        <position position="348"/>
    </location>
</feature>
<gene>
    <name evidence="1" type="primary">murB</name>
    <name type="ordered locus">Tfu_2664</name>
</gene>
<name>MURB_THEFY</name>
<protein>
    <recommendedName>
        <fullName evidence="1">UDP-N-acetylenolpyruvoylglucosamine reductase</fullName>
        <ecNumber evidence="1">1.3.1.98</ecNumber>
    </recommendedName>
    <alternativeName>
        <fullName evidence="1">UDP-N-acetylmuramate dehydrogenase</fullName>
    </alternativeName>
</protein>
<dbReference type="EC" id="1.3.1.98" evidence="1"/>
<dbReference type="EMBL" id="CP000088">
    <property type="protein sequence ID" value="AAZ56697.1"/>
    <property type="molecule type" value="Genomic_DNA"/>
</dbReference>
<dbReference type="RefSeq" id="WP_011293087.1">
    <property type="nucleotide sequence ID" value="NC_007333.1"/>
</dbReference>
<dbReference type="SMR" id="Q47LH5"/>
<dbReference type="STRING" id="269800.Tfu_2664"/>
<dbReference type="KEGG" id="tfu:Tfu_2664"/>
<dbReference type="eggNOG" id="COG0812">
    <property type="taxonomic scope" value="Bacteria"/>
</dbReference>
<dbReference type="HOGENOM" id="CLU_035304_0_1_11"/>
<dbReference type="OrthoDB" id="9804753at2"/>
<dbReference type="UniPathway" id="UPA00219"/>
<dbReference type="GO" id="GO:0005829">
    <property type="term" value="C:cytosol"/>
    <property type="evidence" value="ECO:0007669"/>
    <property type="project" value="TreeGrafter"/>
</dbReference>
<dbReference type="GO" id="GO:0071949">
    <property type="term" value="F:FAD binding"/>
    <property type="evidence" value="ECO:0007669"/>
    <property type="project" value="InterPro"/>
</dbReference>
<dbReference type="GO" id="GO:0008762">
    <property type="term" value="F:UDP-N-acetylmuramate dehydrogenase activity"/>
    <property type="evidence" value="ECO:0007669"/>
    <property type="project" value="UniProtKB-UniRule"/>
</dbReference>
<dbReference type="GO" id="GO:0051301">
    <property type="term" value="P:cell division"/>
    <property type="evidence" value="ECO:0007669"/>
    <property type="project" value="UniProtKB-KW"/>
</dbReference>
<dbReference type="GO" id="GO:0071555">
    <property type="term" value="P:cell wall organization"/>
    <property type="evidence" value="ECO:0007669"/>
    <property type="project" value="UniProtKB-KW"/>
</dbReference>
<dbReference type="GO" id="GO:0009252">
    <property type="term" value="P:peptidoglycan biosynthetic process"/>
    <property type="evidence" value="ECO:0007669"/>
    <property type="project" value="UniProtKB-UniRule"/>
</dbReference>
<dbReference type="GO" id="GO:0008360">
    <property type="term" value="P:regulation of cell shape"/>
    <property type="evidence" value="ECO:0007669"/>
    <property type="project" value="UniProtKB-KW"/>
</dbReference>
<dbReference type="Gene3D" id="3.30.465.10">
    <property type="match status" value="1"/>
</dbReference>
<dbReference type="Gene3D" id="3.90.78.10">
    <property type="entry name" value="UDP-N-acetylenolpyruvoylglucosamine reductase, C-terminal domain"/>
    <property type="match status" value="1"/>
</dbReference>
<dbReference type="Gene3D" id="3.30.43.10">
    <property type="entry name" value="Uridine Diphospho-n-acetylenolpyruvylglucosamine Reductase, domain 2"/>
    <property type="match status" value="1"/>
</dbReference>
<dbReference type="HAMAP" id="MF_00037">
    <property type="entry name" value="MurB"/>
    <property type="match status" value="1"/>
</dbReference>
<dbReference type="InterPro" id="IPR016166">
    <property type="entry name" value="FAD-bd_PCMH"/>
</dbReference>
<dbReference type="InterPro" id="IPR036318">
    <property type="entry name" value="FAD-bd_PCMH-like_sf"/>
</dbReference>
<dbReference type="InterPro" id="IPR016167">
    <property type="entry name" value="FAD-bd_PCMH_sub1"/>
</dbReference>
<dbReference type="InterPro" id="IPR016169">
    <property type="entry name" value="FAD-bd_PCMH_sub2"/>
</dbReference>
<dbReference type="InterPro" id="IPR003170">
    <property type="entry name" value="MurB"/>
</dbReference>
<dbReference type="InterPro" id="IPR011601">
    <property type="entry name" value="MurB_C"/>
</dbReference>
<dbReference type="InterPro" id="IPR036635">
    <property type="entry name" value="MurB_C_sf"/>
</dbReference>
<dbReference type="InterPro" id="IPR006094">
    <property type="entry name" value="Oxid_FAD_bind_N"/>
</dbReference>
<dbReference type="NCBIfam" id="TIGR00179">
    <property type="entry name" value="murB"/>
    <property type="match status" value="1"/>
</dbReference>
<dbReference type="NCBIfam" id="NF000755">
    <property type="entry name" value="PRK00046.1"/>
    <property type="match status" value="1"/>
</dbReference>
<dbReference type="NCBIfam" id="NF010478">
    <property type="entry name" value="PRK13903.1"/>
    <property type="match status" value="1"/>
</dbReference>
<dbReference type="PANTHER" id="PTHR21071">
    <property type="entry name" value="UDP-N-ACETYLENOLPYRUVOYLGLUCOSAMINE REDUCTASE"/>
    <property type="match status" value="1"/>
</dbReference>
<dbReference type="PANTHER" id="PTHR21071:SF4">
    <property type="entry name" value="UDP-N-ACETYLENOLPYRUVOYLGLUCOSAMINE REDUCTASE"/>
    <property type="match status" value="1"/>
</dbReference>
<dbReference type="Pfam" id="PF01565">
    <property type="entry name" value="FAD_binding_4"/>
    <property type="match status" value="1"/>
</dbReference>
<dbReference type="Pfam" id="PF02873">
    <property type="entry name" value="MurB_C"/>
    <property type="match status" value="1"/>
</dbReference>
<dbReference type="SUPFAM" id="SSF56176">
    <property type="entry name" value="FAD-binding/transporter-associated domain-like"/>
    <property type="match status" value="1"/>
</dbReference>
<dbReference type="SUPFAM" id="SSF56194">
    <property type="entry name" value="Uridine diphospho-N-Acetylenolpyruvylglucosamine reductase, MurB, C-terminal domain"/>
    <property type="match status" value="1"/>
</dbReference>
<dbReference type="PROSITE" id="PS51387">
    <property type="entry name" value="FAD_PCMH"/>
    <property type="match status" value="1"/>
</dbReference>
<keyword id="KW-0131">Cell cycle</keyword>
<keyword id="KW-0132">Cell division</keyword>
<keyword id="KW-0133">Cell shape</keyword>
<keyword id="KW-0961">Cell wall biogenesis/degradation</keyword>
<keyword id="KW-0963">Cytoplasm</keyword>
<keyword id="KW-0274">FAD</keyword>
<keyword id="KW-0285">Flavoprotein</keyword>
<keyword id="KW-0521">NADP</keyword>
<keyword id="KW-0560">Oxidoreductase</keyword>
<keyword id="KW-0573">Peptidoglycan synthesis</keyword>
<comment type="function">
    <text evidence="1">Cell wall formation.</text>
</comment>
<comment type="catalytic activity">
    <reaction evidence="1">
        <text>UDP-N-acetyl-alpha-D-muramate + NADP(+) = UDP-N-acetyl-3-O-(1-carboxyvinyl)-alpha-D-glucosamine + NADPH + H(+)</text>
        <dbReference type="Rhea" id="RHEA:12248"/>
        <dbReference type="ChEBI" id="CHEBI:15378"/>
        <dbReference type="ChEBI" id="CHEBI:57783"/>
        <dbReference type="ChEBI" id="CHEBI:58349"/>
        <dbReference type="ChEBI" id="CHEBI:68483"/>
        <dbReference type="ChEBI" id="CHEBI:70757"/>
        <dbReference type="EC" id="1.3.1.98"/>
    </reaction>
</comment>
<comment type="cofactor">
    <cofactor evidence="1">
        <name>FAD</name>
        <dbReference type="ChEBI" id="CHEBI:57692"/>
    </cofactor>
</comment>
<comment type="pathway">
    <text evidence="1">Cell wall biogenesis; peptidoglycan biosynthesis.</text>
</comment>
<comment type="subcellular location">
    <subcellularLocation>
        <location evidence="1">Cytoplasm</location>
    </subcellularLocation>
</comment>
<comment type="similarity">
    <text evidence="1">Belongs to the MurB family.</text>
</comment>
<organism>
    <name type="scientific">Thermobifida fusca (strain YX)</name>
    <dbReference type="NCBI Taxonomy" id="269800"/>
    <lineage>
        <taxon>Bacteria</taxon>
        <taxon>Bacillati</taxon>
        <taxon>Actinomycetota</taxon>
        <taxon>Actinomycetes</taxon>
        <taxon>Streptosporangiales</taxon>
        <taxon>Nocardiopsidaceae</taxon>
        <taxon>Thermobifida</taxon>
    </lineage>
</organism>
<proteinExistence type="inferred from homology"/>
<reference key="1">
    <citation type="journal article" date="2007" name="J. Bacteriol.">
        <title>Genome sequence and analysis of the soil cellulolytic actinomycete Thermobifida fusca YX.</title>
        <authorList>
            <person name="Lykidis A."/>
            <person name="Mavromatis K."/>
            <person name="Ivanova N."/>
            <person name="Anderson I."/>
            <person name="Land M."/>
            <person name="DiBartolo G."/>
            <person name="Martinez M."/>
            <person name="Lapidus A."/>
            <person name="Lucas S."/>
            <person name="Copeland A."/>
            <person name="Richardson P."/>
            <person name="Wilson D.B."/>
            <person name="Kyrpides N."/>
        </authorList>
    </citation>
    <scope>NUCLEOTIDE SEQUENCE [LARGE SCALE GENOMIC DNA]</scope>
    <source>
        <strain>YX</strain>
    </source>
</reference>
<sequence>MTTSFARNVPLADYTTLGLGGPAARFCSVASTDELIATVRDVDRSGDPLLVLGGGSNLVVADEGFAGTVIQVDSSDLSYTEVDDTVVRVRVDAGMEWDSFVARCVDEGLSGVEALSGIPGRVGATPIQNVGAYGQDISQTVVEVTVYDRAADRTRVLSAAECGFAYRTSIFKGRDRYVVCDVVFELTRSKLSRPIRYAELARSLGVSQGDQVPLADVRDAVLSLRRSKGMVLDPADPDTRSAGSFFTNPILSADEFARFTQRVAEVLGPEVTPPAYPDGDGRVKTSAAWLIERAGFPKGYGTGPVGISTKHTLALTNRGGATTADLLALAREVRAGVARVFGITLVNEPVMIGVTL</sequence>
<evidence type="ECO:0000255" key="1">
    <source>
        <dbReference type="HAMAP-Rule" id="MF_00037"/>
    </source>
</evidence>
<accession>Q47LH5</accession>